<dbReference type="EC" id="5.1.1.8" evidence="2"/>
<dbReference type="EMBL" id="CP000285">
    <property type="protein sequence ID" value="ABE59689.1"/>
    <property type="molecule type" value="Genomic_DNA"/>
</dbReference>
<dbReference type="RefSeq" id="WP_011507635.1">
    <property type="nucleotide sequence ID" value="NC_007963.1"/>
</dbReference>
<dbReference type="SMR" id="Q1QV19"/>
<dbReference type="STRING" id="290398.Csal_2339"/>
<dbReference type="GeneID" id="95335050"/>
<dbReference type="KEGG" id="csa:Csal_2339"/>
<dbReference type="eggNOG" id="COG3938">
    <property type="taxonomic scope" value="Bacteria"/>
</dbReference>
<dbReference type="HOGENOM" id="CLU_036729_2_0_6"/>
<dbReference type="OrthoDB" id="181267at2"/>
<dbReference type="SABIO-RK" id="Q1QV19"/>
<dbReference type="Proteomes" id="UP000000239">
    <property type="component" value="Chromosome"/>
</dbReference>
<dbReference type="GO" id="GO:0047580">
    <property type="term" value="F:4-hydroxyproline epimerase activity"/>
    <property type="evidence" value="ECO:0007669"/>
    <property type="project" value="UniProtKB-EC"/>
</dbReference>
<dbReference type="Gene3D" id="3.10.310.10">
    <property type="entry name" value="Diaminopimelate Epimerase, Chain A, domain 1"/>
    <property type="match status" value="2"/>
</dbReference>
<dbReference type="InterPro" id="IPR008794">
    <property type="entry name" value="Pro_racemase_fam"/>
</dbReference>
<dbReference type="PANTHER" id="PTHR33442:SF5">
    <property type="entry name" value="BIFUNCTIONAL TRANS-3-HYDROXY-L-PROLINE DEHYDRATASE_2-EPIMERASE"/>
    <property type="match status" value="1"/>
</dbReference>
<dbReference type="PANTHER" id="PTHR33442">
    <property type="entry name" value="TRANS-3-HYDROXY-L-PROLINE DEHYDRATASE"/>
    <property type="match status" value="1"/>
</dbReference>
<dbReference type="Pfam" id="PF05544">
    <property type="entry name" value="Pro_racemase"/>
    <property type="match status" value="1"/>
</dbReference>
<dbReference type="PIRSF" id="PIRSF029792">
    <property type="entry name" value="Pro_racemase"/>
    <property type="match status" value="1"/>
</dbReference>
<dbReference type="SFLD" id="SFLDS00028">
    <property type="entry name" value="Proline_Racemase"/>
    <property type="match status" value="1"/>
</dbReference>
<dbReference type="SUPFAM" id="SSF54506">
    <property type="entry name" value="Diaminopimelate epimerase-like"/>
    <property type="match status" value="1"/>
</dbReference>
<proteinExistence type="evidence at protein level"/>
<feature type="chain" id="PRO_0000432254" description="Protein Csal_2339">
    <location>
        <begin position="1"/>
        <end position="361"/>
    </location>
</feature>
<feature type="active site" description="Proton acceptor" evidence="1">
    <location>
        <position position="91"/>
    </location>
</feature>
<feature type="binding site" evidence="1">
    <location>
        <begin position="92"/>
        <end position="93"/>
    </location>
    <ligand>
        <name>substrate</name>
    </ligand>
</feature>
<feature type="binding site" evidence="1">
    <location>
        <begin position="259"/>
        <end position="260"/>
    </location>
    <ligand>
        <name>substrate</name>
    </ligand>
</feature>
<keyword id="KW-0413">Isomerase</keyword>
<keyword id="KW-1185">Reference proteome</keyword>
<comment type="function">
    <text evidence="2 3">In vitro, catalyzes the epimerization of trans-4-hydroxy-L-proline (t4LHyp) to cis-4-hydroxy-D-proline (c4DHyp), albeit with very low efficiency. The physiological substrate may be different. Displays neither proline racemase activity nor t3LHyp dehydratase activity.</text>
</comment>
<comment type="catalytic activity">
    <reaction evidence="2">
        <text>trans-4-hydroxy-L-proline = cis-4-hydroxy-D-proline</text>
        <dbReference type="Rhea" id="RHEA:21152"/>
        <dbReference type="ChEBI" id="CHEBI:57690"/>
        <dbReference type="ChEBI" id="CHEBI:58375"/>
        <dbReference type="EC" id="5.1.1.8"/>
    </reaction>
</comment>
<comment type="biophysicochemical properties">
    <kinetics>
        <KM evidence="2">2.5 mM for trans-4-hydroxy-L-proline</KM>
        <text evidence="2">kcat is 0.070 sec(-1) for t4LHyp epimerization.</text>
    </kinetics>
</comment>
<comment type="similarity">
    <text evidence="3">Belongs to the proline racemase family.</text>
</comment>
<evidence type="ECO:0000250" key="1">
    <source>
        <dbReference type="UniProtKB" id="B9K4G4"/>
    </source>
</evidence>
<evidence type="ECO:0000269" key="2">
    <source>
    </source>
</evidence>
<evidence type="ECO:0000305" key="3"/>
<evidence type="ECO:0000312" key="4">
    <source>
        <dbReference type="EMBL" id="ABE59689.1"/>
    </source>
</evidence>
<accession>Q1QV19</accession>
<sequence>MSEELTLQLIDLHAGGDVSRIVTGGIDPLPGNTVREKMEYLREDADGLRQLLLSEPYGIPEMSVDLLVPASDPEAEVGYIIMEVMGYPIYSGSNTICTATAVLESGLVPKREGHQRFILESAAGLVHIEARVENGVVEAITCEGLPSYIDTYRASIHVPSVGDVTYSVAYSGGFYAMVDAAELGFSLNRDEEARLAECAHAIVEAIQAERGFSHYTLGDVGPLPFLHFMGPVEQVADGFFRSRSTTYVHPGVICRSTTGTGTSARLALMHHEGTLQPGDKLETVSLRGTGFIGEFTGSRQEGDHRVAENTITGKAHMLARSDIVINCNDPLVECGSLHHILTSGHRRTEALPVEEEVSLSD</sequence>
<name>Y2339_CHRSD</name>
<reference key="1">
    <citation type="journal article" date="2011" name="Stand. Genomic Sci.">
        <title>Complete genome sequence of the halophilic and highly halotolerant Chromohalobacter salexigens type strain (1H11(T)).</title>
        <authorList>
            <person name="Copeland A."/>
            <person name="O'Connor K."/>
            <person name="Lucas S."/>
            <person name="Lapidus A."/>
            <person name="Berry K.W."/>
            <person name="Detter J.C."/>
            <person name="Del Rio T.G."/>
            <person name="Hammon N."/>
            <person name="Dalin E."/>
            <person name="Tice H."/>
            <person name="Pitluck S."/>
            <person name="Bruce D."/>
            <person name="Goodwin L."/>
            <person name="Han C."/>
            <person name="Tapia R."/>
            <person name="Saunders E."/>
            <person name="Schmutz J."/>
            <person name="Brettin T."/>
            <person name="Larimer F."/>
            <person name="Land M."/>
            <person name="Hauser L."/>
            <person name="Vargas C."/>
            <person name="Nieto J.J."/>
            <person name="Kyrpides N.C."/>
            <person name="Ivanova N."/>
            <person name="Goker M."/>
            <person name="Klenk H.P."/>
            <person name="Csonka L.N."/>
            <person name="Woyke T."/>
        </authorList>
    </citation>
    <scope>NUCLEOTIDE SEQUENCE [LARGE SCALE GENOMIC DNA]</scope>
    <source>
        <strain>ATCC BAA-138 / DSM 3043 / CIP 106854 / NCIMB 13768 / 1H11</strain>
    </source>
</reference>
<reference key="2">
    <citation type="journal article" date="2014" name="Elife">
        <title>Prediction and characterization of enzymatic activities guided by sequence similarity and genome neighborhood networks.</title>
        <authorList>
            <person name="Zhao S."/>
            <person name="Sakai A."/>
            <person name="Zhang X."/>
            <person name="Vetting M.W."/>
            <person name="Kumar R."/>
            <person name="Hillerich B."/>
            <person name="San Francisco B."/>
            <person name="Solbiati J."/>
            <person name="Steves A."/>
            <person name="Brown S."/>
            <person name="Akiva E."/>
            <person name="Barber A."/>
            <person name="Seidel R.D."/>
            <person name="Babbitt P.C."/>
            <person name="Almo S.C."/>
            <person name="Gerlt J.A."/>
            <person name="Jacobson M.P."/>
        </authorList>
    </citation>
    <scope>FUNCTION</scope>
    <scope>CATALYTIC ACTIVITY</scope>
    <scope>BIOPHYSICOCHEMICAL PROPERTIES</scope>
</reference>
<gene>
    <name evidence="4" type="ordered locus">Csal_2339</name>
</gene>
<organism>
    <name type="scientific">Chromohalobacter salexigens (strain ATCC BAA-138 / DSM 3043 / CIP 106854 / NCIMB 13768 / 1H11)</name>
    <dbReference type="NCBI Taxonomy" id="290398"/>
    <lineage>
        <taxon>Bacteria</taxon>
        <taxon>Pseudomonadati</taxon>
        <taxon>Pseudomonadota</taxon>
        <taxon>Gammaproteobacteria</taxon>
        <taxon>Oceanospirillales</taxon>
        <taxon>Halomonadaceae</taxon>
        <taxon>Chromohalobacter</taxon>
    </lineage>
</organism>
<protein>
    <recommendedName>
        <fullName>Protein Csal_2339</fullName>
        <ecNumber evidence="2">5.1.1.8</ecNumber>
    </recommendedName>
</protein>